<organism>
    <name type="scientific">Opitutus terrae (strain DSM 11246 / JCM 15787 / PB90-1)</name>
    <dbReference type="NCBI Taxonomy" id="452637"/>
    <lineage>
        <taxon>Bacteria</taxon>
        <taxon>Pseudomonadati</taxon>
        <taxon>Verrucomicrobiota</taxon>
        <taxon>Opitutia</taxon>
        <taxon>Opitutales</taxon>
        <taxon>Opitutaceae</taxon>
        <taxon>Opitutus</taxon>
    </lineage>
</organism>
<comment type="function">
    <text evidence="1">NAD-binding protein involved in the addition of a carboxymethylaminomethyl (cmnm) group at the wobble position (U34) of certain tRNAs, forming tRNA-cmnm(5)s(2)U34.</text>
</comment>
<comment type="cofactor">
    <cofactor evidence="1">
        <name>FAD</name>
        <dbReference type="ChEBI" id="CHEBI:57692"/>
    </cofactor>
</comment>
<comment type="subunit">
    <text evidence="1">Homodimer. Heterotetramer of two MnmE and two MnmG subunits.</text>
</comment>
<comment type="subcellular location">
    <subcellularLocation>
        <location evidence="1">Cytoplasm</location>
    </subcellularLocation>
</comment>
<comment type="similarity">
    <text evidence="1">Belongs to the MnmG family.</text>
</comment>
<comment type="sequence caution" evidence="2">
    <conflict type="erroneous initiation">
        <sequence resource="EMBL-CDS" id="ACB74171"/>
    </conflict>
</comment>
<accession>B1ZWP4</accession>
<feature type="chain" id="PRO_0000345310" description="tRNA uridine 5-carboxymethylaminomethyl modification enzyme MnmG">
    <location>
        <begin position="1"/>
        <end position="634"/>
    </location>
</feature>
<feature type="binding site" evidence="1">
    <location>
        <begin position="14"/>
        <end position="19"/>
    </location>
    <ligand>
        <name>FAD</name>
        <dbReference type="ChEBI" id="CHEBI:57692"/>
    </ligand>
</feature>
<feature type="binding site" evidence="1">
    <location>
        <begin position="292"/>
        <end position="306"/>
    </location>
    <ligand>
        <name>NAD(+)</name>
        <dbReference type="ChEBI" id="CHEBI:57540"/>
    </ligand>
</feature>
<dbReference type="EMBL" id="CP001032">
    <property type="protein sequence ID" value="ACB74171.1"/>
    <property type="status" value="ALT_INIT"/>
    <property type="molecule type" value="Genomic_DNA"/>
</dbReference>
<dbReference type="RefSeq" id="WP_044891563.1">
    <property type="nucleotide sequence ID" value="NC_010571.1"/>
</dbReference>
<dbReference type="SMR" id="B1ZWP4"/>
<dbReference type="STRING" id="452637.Oter_0883"/>
<dbReference type="KEGG" id="ote:Oter_0883"/>
<dbReference type="eggNOG" id="COG0445">
    <property type="taxonomic scope" value="Bacteria"/>
</dbReference>
<dbReference type="HOGENOM" id="CLU_007831_2_2_0"/>
<dbReference type="OrthoDB" id="9815560at2"/>
<dbReference type="Proteomes" id="UP000007013">
    <property type="component" value="Chromosome"/>
</dbReference>
<dbReference type="GO" id="GO:0005829">
    <property type="term" value="C:cytosol"/>
    <property type="evidence" value="ECO:0007669"/>
    <property type="project" value="TreeGrafter"/>
</dbReference>
<dbReference type="GO" id="GO:0050660">
    <property type="term" value="F:flavin adenine dinucleotide binding"/>
    <property type="evidence" value="ECO:0007669"/>
    <property type="project" value="UniProtKB-UniRule"/>
</dbReference>
<dbReference type="GO" id="GO:0030488">
    <property type="term" value="P:tRNA methylation"/>
    <property type="evidence" value="ECO:0007669"/>
    <property type="project" value="TreeGrafter"/>
</dbReference>
<dbReference type="GO" id="GO:0002098">
    <property type="term" value="P:tRNA wobble uridine modification"/>
    <property type="evidence" value="ECO:0007669"/>
    <property type="project" value="InterPro"/>
</dbReference>
<dbReference type="FunFam" id="1.10.150.570:FF:000001">
    <property type="entry name" value="tRNA uridine 5-carboxymethylaminomethyl modification enzyme MnmG"/>
    <property type="match status" value="1"/>
</dbReference>
<dbReference type="FunFam" id="3.50.50.60:FF:000002">
    <property type="entry name" value="tRNA uridine 5-carboxymethylaminomethyl modification enzyme MnmG"/>
    <property type="match status" value="1"/>
</dbReference>
<dbReference type="Gene3D" id="3.50.50.60">
    <property type="entry name" value="FAD/NAD(P)-binding domain"/>
    <property type="match status" value="2"/>
</dbReference>
<dbReference type="Gene3D" id="1.10.150.570">
    <property type="entry name" value="GidA associated domain, C-terminal subdomain"/>
    <property type="match status" value="1"/>
</dbReference>
<dbReference type="HAMAP" id="MF_00129">
    <property type="entry name" value="MnmG_GidA"/>
    <property type="match status" value="1"/>
</dbReference>
<dbReference type="InterPro" id="IPR036188">
    <property type="entry name" value="FAD/NAD-bd_sf"/>
</dbReference>
<dbReference type="InterPro" id="IPR004416">
    <property type="entry name" value="MnmG"/>
</dbReference>
<dbReference type="InterPro" id="IPR002218">
    <property type="entry name" value="MnmG-rel"/>
</dbReference>
<dbReference type="InterPro" id="IPR020595">
    <property type="entry name" value="MnmG-rel_CS"/>
</dbReference>
<dbReference type="InterPro" id="IPR026904">
    <property type="entry name" value="MnmG_C"/>
</dbReference>
<dbReference type="InterPro" id="IPR047001">
    <property type="entry name" value="MnmG_C_subdom"/>
</dbReference>
<dbReference type="InterPro" id="IPR044920">
    <property type="entry name" value="MnmG_C_subdom_sf"/>
</dbReference>
<dbReference type="InterPro" id="IPR040131">
    <property type="entry name" value="MnmG_N"/>
</dbReference>
<dbReference type="NCBIfam" id="TIGR00136">
    <property type="entry name" value="mnmG_gidA"/>
    <property type="match status" value="1"/>
</dbReference>
<dbReference type="PANTHER" id="PTHR11806">
    <property type="entry name" value="GLUCOSE INHIBITED DIVISION PROTEIN A"/>
    <property type="match status" value="1"/>
</dbReference>
<dbReference type="PANTHER" id="PTHR11806:SF0">
    <property type="entry name" value="PROTEIN MTO1 HOMOLOG, MITOCHONDRIAL"/>
    <property type="match status" value="1"/>
</dbReference>
<dbReference type="Pfam" id="PF01134">
    <property type="entry name" value="GIDA"/>
    <property type="match status" value="1"/>
</dbReference>
<dbReference type="Pfam" id="PF13932">
    <property type="entry name" value="SAM_GIDA_C"/>
    <property type="match status" value="1"/>
</dbReference>
<dbReference type="PRINTS" id="PR00411">
    <property type="entry name" value="PNDRDTASEI"/>
</dbReference>
<dbReference type="SMART" id="SM01228">
    <property type="entry name" value="GIDA_assoc_3"/>
    <property type="match status" value="1"/>
</dbReference>
<dbReference type="SUPFAM" id="SSF51905">
    <property type="entry name" value="FAD/NAD(P)-binding domain"/>
    <property type="match status" value="1"/>
</dbReference>
<dbReference type="PROSITE" id="PS01280">
    <property type="entry name" value="GIDA_1"/>
    <property type="match status" value="1"/>
</dbReference>
<dbReference type="PROSITE" id="PS01281">
    <property type="entry name" value="GIDA_2"/>
    <property type="match status" value="1"/>
</dbReference>
<reference key="1">
    <citation type="journal article" date="2011" name="J. Bacteriol.">
        <title>Genome sequence of the verrucomicrobium Opitutus terrae PB90-1, an abundant inhabitant of rice paddy soil ecosystems.</title>
        <authorList>
            <person name="van Passel M.W."/>
            <person name="Kant R."/>
            <person name="Palva A."/>
            <person name="Copeland A."/>
            <person name="Lucas S."/>
            <person name="Lapidus A."/>
            <person name="Glavina del Rio T."/>
            <person name="Pitluck S."/>
            <person name="Goltsman E."/>
            <person name="Clum A."/>
            <person name="Sun H."/>
            <person name="Schmutz J."/>
            <person name="Larimer F.W."/>
            <person name="Land M.L."/>
            <person name="Hauser L."/>
            <person name="Kyrpides N."/>
            <person name="Mikhailova N."/>
            <person name="Richardson P.P."/>
            <person name="Janssen P.H."/>
            <person name="de Vos W.M."/>
            <person name="Smidt H."/>
        </authorList>
    </citation>
    <scope>NUCLEOTIDE SEQUENCE [LARGE SCALE GENOMIC DNA]</scope>
    <source>
        <strain>DSM 11246 / JCM 15787 / PB90-1</strain>
    </source>
</reference>
<proteinExistence type="inferred from homology"/>
<protein>
    <recommendedName>
        <fullName evidence="1">tRNA uridine 5-carboxymethylaminomethyl modification enzyme MnmG</fullName>
    </recommendedName>
    <alternativeName>
        <fullName evidence="1">Glucose-inhibited division protein A</fullName>
    </alternativeName>
</protein>
<sequence length="634" mass="69723">MRFNSEPFDVIVCGAGHAGIEASLAAARVGAFTLLLTGNLDTVGQMSCNPAIGGQAKGQIVREIDALGGEMAINTDVTGIQFRLLNHTKGPAVQSPRAQCDKKAYQFRLKHTLELQPHLQLFQATVTGLIFDGAKVIGCRTNLDIEFYGRTVVVTTGTFLRGLMHIGSNKNEGGRLGDFSARTLSGSLQEAGIELRRFKTGTPPRLLGRSLDFSKMEEQKGDANPTFFAFHDTREDGGVFHVEHGKPQGEAIPPGCEQVSCWMTYTTARTAELVRENLSRSAMYGGEIEGVGPRYCPSIEDKFVRFADKPRHLLFLEPEGRGTDEFYVNGLSTSLPFDVQLELVHSIPGLGEAVLLRPAYAVEYDYAPPTQLKMSLESQRVEGLFLAGQINGTSGYEEAAGQGLIAGVNAARKGRGEQPLVLGRHEAYIGVLIDDLVTKGTEEPYRMFTSRAEHRLLLNHGSAELRLLHHASGCKLLNVNRLDNIARKKEAIESWVRRLESERTSEGTLAEIIRRQNARAELPSELMRQSKPVRDEVLYRVLYSGYWEREQRHIDKLAQIEAVRIPAAIDYLRIPGLRRESALKLAAQRPDTLGQASRISGVNPADVSILMVLIKTGKTPSLPDTATTDGRDVP</sequence>
<keyword id="KW-0963">Cytoplasm</keyword>
<keyword id="KW-0274">FAD</keyword>
<keyword id="KW-0285">Flavoprotein</keyword>
<keyword id="KW-0520">NAD</keyword>
<keyword id="KW-1185">Reference proteome</keyword>
<keyword id="KW-0819">tRNA processing</keyword>
<gene>
    <name evidence="1" type="primary">mnmG</name>
    <name evidence="1" type="synonym">gidA</name>
    <name type="ordered locus">Oter_0883</name>
</gene>
<evidence type="ECO:0000255" key="1">
    <source>
        <dbReference type="HAMAP-Rule" id="MF_00129"/>
    </source>
</evidence>
<evidence type="ECO:0000305" key="2"/>
<name>MNMG_OPITP</name>